<evidence type="ECO:0000255" key="1">
    <source>
        <dbReference type="HAMAP-Rule" id="MF_00323"/>
    </source>
</evidence>
<sequence>MNDAKYGVLLVNLGTPDAPQPDAVKRYLAQFLSDPRVVDVSPWIWKPILHGVILPFRSPKVAKLYQQIWLPDGSPLLVYSRAQQKALAQRFAHIPVELGMCYGNPSLNEGLTRLLAQGVEKLIVLPLYPQYSCSTSGAVFDGISQLFKTMRTIPSLHFVRSYAQHPLYIKALVNSIDESFKQHGKPDRLVLSFHGIPERFIKTGDIYFDECCLTVEKLKQQLDYPAEKVMMTFQSRFGREPWLSPYTDKTMEKLGSEGVEHVQVICPGFSSDCLETLEEINEQNREFFIHGGGKQYEYIPALNDKVEHIDLLEAIIRDICEK</sequence>
<keyword id="KW-0963">Cytoplasm</keyword>
<keyword id="KW-0350">Heme biosynthesis</keyword>
<keyword id="KW-0408">Iron</keyword>
<keyword id="KW-0456">Lyase</keyword>
<keyword id="KW-0479">Metal-binding</keyword>
<keyword id="KW-0627">Porphyrin biosynthesis</keyword>
<keyword id="KW-1185">Reference proteome</keyword>
<comment type="function">
    <text evidence="1">Catalyzes the ferrous insertion into protoporphyrin IX.</text>
</comment>
<comment type="catalytic activity">
    <reaction evidence="1">
        <text>heme b + 2 H(+) = protoporphyrin IX + Fe(2+)</text>
        <dbReference type="Rhea" id="RHEA:22584"/>
        <dbReference type="ChEBI" id="CHEBI:15378"/>
        <dbReference type="ChEBI" id="CHEBI:29033"/>
        <dbReference type="ChEBI" id="CHEBI:57306"/>
        <dbReference type="ChEBI" id="CHEBI:60344"/>
        <dbReference type="EC" id="4.98.1.1"/>
    </reaction>
</comment>
<comment type="pathway">
    <text evidence="1">Porphyrin-containing compound metabolism; protoheme biosynthesis; protoheme from protoporphyrin-IX: step 1/1.</text>
</comment>
<comment type="subcellular location">
    <subcellularLocation>
        <location evidence="1">Cytoplasm</location>
    </subcellularLocation>
</comment>
<comment type="similarity">
    <text evidence="1">Belongs to the ferrochelatase family.</text>
</comment>
<feature type="chain" id="PRO_1000116067" description="Ferrochelatase">
    <location>
        <begin position="1"/>
        <end position="322"/>
    </location>
</feature>
<feature type="binding site" evidence="1">
    <location>
        <position position="194"/>
    </location>
    <ligand>
        <name>Fe cation</name>
        <dbReference type="ChEBI" id="CHEBI:24875"/>
    </ligand>
</feature>
<feature type="binding site" evidence="1">
    <location>
        <position position="275"/>
    </location>
    <ligand>
        <name>Fe cation</name>
        <dbReference type="ChEBI" id="CHEBI:24875"/>
    </ligand>
</feature>
<reference key="1">
    <citation type="journal article" date="2008" name="J. Bacteriol.">
        <title>Complete genome sequence of uropathogenic Proteus mirabilis, a master of both adherence and motility.</title>
        <authorList>
            <person name="Pearson M.M."/>
            <person name="Sebaihia M."/>
            <person name="Churcher C."/>
            <person name="Quail M.A."/>
            <person name="Seshasayee A.S."/>
            <person name="Luscombe N.M."/>
            <person name="Abdellah Z."/>
            <person name="Arrosmith C."/>
            <person name="Atkin B."/>
            <person name="Chillingworth T."/>
            <person name="Hauser H."/>
            <person name="Jagels K."/>
            <person name="Moule S."/>
            <person name="Mungall K."/>
            <person name="Norbertczak H."/>
            <person name="Rabbinowitsch E."/>
            <person name="Walker D."/>
            <person name="Whithead S."/>
            <person name="Thomson N.R."/>
            <person name="Rather P.N."/>
            <person name="Parkhill J."/>
            <person name="Mobley H.L.T."/>
        </authorList>
    </citation>
    <scope>NUCLEOTIDE SEQUENCE [LARGE SCALE GENOMIC DNA]</scope>
    <source>
        <strain>HI4320</strain>
    </source>
</reference>
<name>HEMH_PROMH</name>
<accession>B4F1Q1</accession>
<protein>
    <recommendedName>
        <fullName evidence="1">Ferrochelatase</fullName>
        <ecNumber evidence="1">4.98.1.1</ecNumber>
    </recommendedName>
    <alternativeName>
        <fullName evidence="1">Heme synthase</fullName>
    </alternativeName>
    <alternativeName>
        <fullName evidence="1">Protoheme ferro-lyase</fullName>
    </alternativeName>
</protein>
<proteinExistence type="inferred from homology"/>
<organism>
    <name type="scientific">Proteus mirabilis (strain HI4320)</name>
    <dbReference type="NCBI Taxonomy" id="529507"/>
    <lineage>
        <taxon>Bacteria</taxon>
        <taxon>Pseudomonadati</taxon>
        <taxon>Pseudomonadota</taxon>
        <taxon>Gammaproteobacteria</taxon>
        <taxon>Enterobacterales</taxon>
        <taxon>Morganellaceae</taxon>
        <taxon>Proteus</taxon>
    </lineage>
</organism>
<gene>
    <name evidence="1" type="primary">hemH</name>
    <name type="ordered locus">PMI2183</name>
</gene>
<dbReference type="EC" id="4.98.1.1" evidence="1"/>
<dbReference type="EMBL" id="AM942759">
    <property type="protein sequence ID" value="CAR44341.1"/>
    <property type="molecule type" value="Genomic_DNA"/>
</dbReference>
<dbReference type="RefSeq" id="WP_004244277.1">
    <property type="nucleotide sequence ID" value="NC_010554.1"/>
</dbReference>
<dbReference type="SMR" id="B4F1Q1"/>
<dbReference type="EnsemblBacteria" id="CAR44341">
    <property type="protein sequence ID" value="CAR44341"/>
    <property type="gene ID" value="PMI2183"/>
</dbReference>
<dbReference type="GeneID" id="6801718"/>
<dbReference type="KEGG" id="pmr:PMI2183"/>
<dbReference type="eggNOG" id="COG0276">
    <property type="taxonomic scope" value="Bacteria"/>
</dbReference>
<dbReference type="HOGENOM" id="CLU_018884_0_0_6"/>
<dbReference type="UniPathway" id="UPA00252">
    <property type="reaction ID" value="UER00325"/>
</dbReference>
<dbReference type="Proteomes" id="UP000008319">
    <property type="component" value="Chromosome"/>
</dbReference>
<dbReference type="GO" id="GO:0005737">
    <property type="term" value="C:cytoplasm"/>
    <property type="evidence" value="ECO:0007669"/>
    <property type="project" value="UniProtKB-SubCell"/>
</dbReference>
<dbReference type="GO" id="GO:0004325">
    <property type="term" value="F:ferrochelatase activity"/>
    <property type="evidence" value="ECO:0007669"/>
    <property type="project" value="UniProtKB-UniRule"/>
</dbReference>
<dbReference type="GO" id="GO:0046872">
    <property type="term" value="F:metal ion binding"/>
    <property type="evidence" value="ECO:0007669"/>
    <property type="project" value="UniProtKB-KW"/>
</dbReference>
<dbReference type="GO" id="GO:0006783">
    <property type="term" value="P:heme biosynthetic process"/>
    <property type="evidence" value="ECO:0007669"/>
    <property type="project" value="UniProtKB-UniRule"/>
</dbReference>
<dbReference type="CDD" id="cd00419">
    <property type="entry name" value="Ferrochelatase_C"/>
    <property type="match status" value="1"/>
</dbReference>
<dbReference type="CDD" id="cd03411">
    <property type="entry name" value="Ferrochelatase_N"/>
    <property type="match status" value="1"/>
</dbReference>
<dbReference type="FunFam" id="3.40.50.1400:FF:000002">
    <property type="entry name" value="Ferrochelatase"/>
    <property type="match status" value="1"/>
</dbReference>
<dbReference type="Gene3D" id="3.40.50.1400">
    <property type="match status" value="2"/>
</dbReference>
<dbReference type="HAMAP" id="MF_00323">
    <property type="entry name" value="Ferrochelatase"/>
    <property type="match status" value="1"/>
</dbReference>
<dbReference type="InterPro" id="IPR001015">
    <property type="entry name" value="Ferrochelatase"/>
</dbReference>
<dbReference type="InterPro" id="IPR019772">
    <property type="entry name" value="Ferrochelatase_AS"/>
</dbReference>
<dbReference type="InterPro" id="IPR033644">
    <property type="entry name" value="Ferrochelatase_C"/>
</dbReference>
<dbReference type="InterPro" id="IPR033659">
    <property type="entry name" value="Ferrochelatase_N"/>
</dbReference>
<dbReference type="NCBIfam" id="TIGR00109">
    <property type="entry name" value="hemH"/>
    <property type="match status" value="1"/>
</dbReference>
<dbReference type="PANTHER" id="PTHR11108">
    <property type="entry name" value="FERROCHELATASE"/>
    <property type="match status" value="1"/>
</dbReference>
<dbReference type="PANTHER" id="PTHR11108:SF1">
    <property type="entry name" value="FERROCHELATASE, MITOCHONDRIAL"/>
    <property type="match status" value="1"/>
</dbReference>
<dbReference type="Pfam" id="PF00762">
    <property type="entry name" value="Ferrochelatase"/>
    <property type="match status" value="1"/>
</dbReference>
<dbReference type="SUPFAM" id="SSF53800">
    <property type="entry name" value="Chelatase"/>
    <property type="match status" value="1"/>
</dbReference>
<dbReference type="PROSITE" id="PS00534">
    <property type="entry name" value="FERROCHELATASE"/>
    <property type="match status" value="1"/>
</dbReference>